<accession>Q753J1</accession>
<reference key="1">
    <citation type="journal article" date="2004" name="Science">
        <title>The Ashbya gossypii genome as a tool for mapping the ancient Saccharomyces cerevisiae genome.</title>
        <authorList>
            <person name="Dietrich F.S."/>
            <person name="Voegeli S."/>
            <person name="Brachat S."/>
            <person name="Lerch A."/>
            <person name="Gates K."/>
            <person name="Steiner S."/>
            <person name="Mohr C."/>
            <person name="Poehlmann R."/>
            <person name="Luedi P."/>
            <person name="Choi S."/>
            <person name="Wing R.A."/>
            <person name="Flavier A."/>
            <person name="Gaffney T.D."/>
            <person name="Philippsen P."/>
        </authorList>
    </citation>
    <scope>NUCLEOTIDE SEQUENCE [LARGE SCALE GENOMIC DNA]</scope>
    <source>
        <strain>ATCC 10895 / CBS 109.51 / FGSC 9923 / NRRL Y-1056</strain>
    </source>
</reference>
<reference key="2">
    <citation type="journal article" date="2013" name="G3 (Bethesda)">
        <title>Genomes of Ashbya fungi isolated from insects reveal four mating-type loci, numerous translocations, lack of transposons, and distinct gene duplications.</title>
        <authorList>
            <person name="Dietrich F.S."/>
            <person name="Voegeli S."/>
            <person name="Kuo S."/>
            <person name="Philippsen P."/>
        </authorList>
    </citation>
    <scope>GENOME REANNOTATION</scope>
    <source>
        <strain>ATCC 10895 / CBS 109.51 / FGSC 9923 / NRRL Y-1056</strain>
    </source>
</reference>
<name>NCA2_EREGS</name>
<gene>
    <name type="primary">NCA2</name>
    <name type="ordered locus">AFR321C</name>
</gene>
<proteinExistence type="inferred from homology"/>
<keyword id="KW-0472">Membrane</keyword>
<keyword id="KW-0496">Mitochondrion</keyword>
<keyword id="KW-1185">Reference proteome</keyword>
<keyword id="KW-0812">Transmembrane</keyword>
<keyword id="KW-1133">Transmembrane helix</keyword>
<dbReference type="EMBL" id="AE016819">
    <property type="protein sequence ID" value="AAS53692.1"/>
    <property type="molecule type" value="Genomic_DNA"/>
</dbReference>
<dbReference type="RefSeq" id="NP_985868.1">
    <property type="nucleotide sequence ID" value="NM_211223.1"/>
</dbReference>
<dbReference type="FunCoup" id="Q753J1">
    <property type="interactions" value="42"/>
</dbReference>
<dbReference type="STRING" id="284811.Q753J1"/>
<dbReference type="EnsemblFungi" id="AAS53692">
    <property type="protein sequence ID" value="AAS53692"/>
    <property type="gene ID" value="AGOS_AFR321C"/>
</dbReference>
<dbReference type="GeneID" id="4622132"/>
<dbReference type="KEGG" id="ago:AGOS_AFR321C"/>
<dbReference type="eggNOG" id="ENOG502QTT6">
    <property type="taxonomic scope" value="Eukaryota"/>
</dbReference>
<dbReference type="HOGENOM" id="CLU_008227_2_0_1"/>
<dbReference type="InParanoid" id="Q753J1"/>
<dbReference type="OMA" id="NRIYHVY"/>
<dbReference type="OrthoDB" id="413313at2759"/>
<dbReference type="Proteomes" id="UP000000591">
    <property type="component" value="Chromosome VI"/>
</dbReference>
<dbReference type="GO" id="GO:0005741">
    <property type="term" value="C:mitochondrial outer membrane"/>
    <property type="evidence" value="ECO:0000318"/>
    <property type="project" value="GO_Central"/>
</dbReference>
<dbReference type="GO" id="GO:0009060">
    <property type="term" value="P:aerobic respiration"/>
    <property type="evidence" value="ECO:0007669"/>
    <property type="project" value="EnsemblFungi"/>
</dbReference>
<dbReference type="GO" id="GO:0016071">
    <property type="term" value="P:mRNA metabolic process"/>
    <property type="evidence" value="ECO:0007669"/>
    <property type="project" value="EnsemblFungi"/>
</dbReference>
<dbReference type="InterPro" id="IPR013946">
    <property type="entry name" value="NCA2"/>
</dbReference>
<dbReference type="PANTHER" id="PTHR28234">
    <property type="entry name" value="NUCLEAR CONTROL OF ATPASE PROTEIN 2"/>
    <property type="match status" value="1"/>
</dbReference>
<dbReference type="PANTHER" id="PTHR28234:SF1">
    <property type="entry name" value="NUCLEAR CONTROL OF ATPASE PROTEIN 2"/>
    <property type="match status" value="1"/>
</dbReference>
<dbReference type="Pfam" id="PF08637">
    <property type="entry name" value="NCA2"/>
    <property type="match status" value="1"/>
</dbReference>
<protein>
    <recommendedName>
        <fullName>Nuclear control of ATPase protein 2</fullName>
    </recommendedName>
</protein>
<comment type="function">
    <text evidence="1">Involved in the mitochondrial expression of subunits 6 and 8 of the F0-F1 ATP synthase.</text>
</comment>
<comment type="subcellular location">
    <subcellularLocation>
        <location evidence="1">Mitochondrion membrane</location>
        <topology evidence="1">Multi-pass membrane protein</topology>
    </subcellularLocation>
</comment>
<feature type="chain" id="PRO_0000096753" description="Nuclear control of ATPase protein 2">
    <location>
        <begin position="1"/>
        <end position="569"/>
    </location>
</feature>
<feature type="transmembrane region" description="Helical" evidence="2">
    <location>
        <begin position="279"/>
        <end position="299"/>
    </location>
</feature>
<feature type="transmembrane region" description="Helical" evidence="2">
    <location>
        <begin position="442"/>
        <end position="462"/>
    </location>
</feature>
<sequence length="569" mass="64533">MIASRYVASELESVTRKLELQLYERAAISEVLEQTSTDLELAKANEVLQTIKEEADACVAAINGGQKFYTIKYDQILSGLESLSGGQWSVGSPLEPLIRDGISDYLHILLYYALLSKNLAKLPQLLLDQEYYGHVSRCSWFMRLFYGLQIMPVKLIEFFRGHALQELPSKLRQTLRIHNFQLVGLPTQRAWQWTKLPIAMVDTDIIQKTASLDSQLDINVKKFGKLLREFPRQKSDRLEVLSDFLDLKPGSSEFAVVRAVQKWNVDSCAPQPNWIVRYWPTILIALAGGPAGIAAIWNARNDIAAFIKHNLFEFARDLVKNWLVEPLRNIWSTVHHDPTSSIAIMSQGTLDTEINSLQRMLIDFLKEHEYANTVDTSVLMKEIEQGNLTQFMEIYEAQLRKPIRNLVTGDLIRSLLIQIQKGKVDGSLAIHGIDKLLQSQQLVFGIVSISPALLILYVLCNSLTKLVKYGTVWSKGAKYRRSVSVSLNNVERLLNSPIEEFDGDKGNWNLGLLTLEMANLREYGAKLVPHSRTAEWCRDIDEMASSSALSTTGKLNVINRIYHVYGKYF</sequence>
<evidence type="ECO:0000250" key="1"/>
<evidence type="ECO:0000255" key="2"/>
<organism>
    <name type="scientific">Eremothecium gossypii (strain ATCC 10895 / CBS 109.51 / FGSC 9923 / NRRL Y-1056)</name>
    <name type="common">Yeast</name>
    <name type="synonym">Ashbya gossypii</name>
    <dbReference type="NCBI Taxonomy" id="284811"/>
    <lineage>
        <taxon>Eukaryota</taxon>
        <taxon>Fungi</taxon>
        <taxon>Dikarya</taxon>
        <taxon>Ascomycota</taxon>
        <taxon>Saccharomycotina</taxon>
        <taxon>Saccharomycetes</taxon>
        <taxon>Saccharomycetales</taxon>
        <taxon>Saccharomycetaceae</taxon>
        <taxon>Eremothecium</taxon>
    </lineage>
</organism>